<comment type="function">
    <text evidence="1">Catalyzes the anti-1,4-elimination of the C-3 phosphate and the C-6 proR hydrogen from 5-enolpyruvylshikimate-3-phosphate (EPSP) to yield chorismate, which is the branch point compound that serves as the starting substrate for the three terminal pathways of aromatic amino acid biosynthesis. This reaction introduces a second double bond into the aromatic ring system.</text>
</comment>
<comment type="catalytic activity">
    <reaction evidence="1">
        <text>5-O-(1-carboxyvinyl)-3-phosphoshikimate = chorismate + phosphate</text>
        <dbReference type="Rhea" id="RHEA:21020"/>
        <dbReference type="ChEBI" id="CHEBI:29748"/>
        <dbReference type="ChEBI" id="CHEBI:43474"/>
        <dbReference type="ChEBI" id="CHEBI:57701"/>
        <dbReference type="EC" id="4.2.3.5"/>
    </reaction>
</comment>
<comment type="cofactor">
    <cofactor evidence="1">
        <name>FMNH2</name>
        <dbReference type="ChEBI" id="CHEBI:57618"/>
    </cofactor>
    <text evidence="1">Reduced FMN (FMNH(2)).</text>
</comment>
<comment type="pathway">
    <text evidence="1">Metabolic intermediate biosynthesis; chorismate biosynthesis; chorismate from D-erythrose 4-phosphate and phosphoenolpyruvate: step 7/7.</text>
</comment>
<comment type="subunit">
    <text evidence="1">Homotetramer.</text>
</comment>
<comment type="similarity">
    <text evidence="1">Belongs to the chorismate synthase family.</text>
</comment>
<proteinExistence type="inferred from homology"/>
<reference key="1">
    <citation type="journal article" date="2006" name="Proc. Natl. Acad. Sci. U.S.A.">
        <title>Burkholderia xenovorans LB400 harbors a multi-replicon, 9.73-Mbp genome shaped for versatility.</title>
        <authorList>
            <person name="Chain P.S.G."/>
            <person name="Denef V.J."/>
            <person name="Konstantinidis K.T."/>
            <person name="Vergez L.M."/>
            <person name="Agullo L."/>
            <person name="Reyes V.L."/>
            <person name="Hauser L."/>
            <person name="Cordova M."/>
            <person name="Gomez L."/>
            <person name="Gonzalez M."/>
            <person name="Land M."/>
            <person name="Lao V."/>
            <person name="Larimer F."/>
            <person name="LiPuma J.J."/>
            <person name="Mahenthiralingam E."/>
            <person name="Malfatti S.A."/>
            <person name="Marx C.J."/>
            <person name="Parnell J.J."/>
            <person name="Ramette A."/>
            <person name="Richardson P."/>
            <person name="Seeger M."/>
            <person name="Smith D."/>
            <person name="Spilker T."/>
            <person name="Sul W.J."/>
            <person name="Tsoi T.V."/>
            <person name="Ulrich L.E."/>
            <person name="Zhulin I.B."/>
            <person name="Tiedje J.M."/>
        </authorList>
    </citation>
    <scope>NUCLEOTIDE SEQUENCE [LARGE SCALE GENOMIC DNA]</scope>
    <source>
        <strain>LB400</strain>
    </source>
</reference>
<gene>
    <name evidence="1" type="primary">aroC</name>
    <name type="ordered locus">Bxeno_A3055</name>
    <name type="ORF">Bxe_A1360</name>
</gene>
<protein>
    <recommendedName>
        <fullName evidence="1">Chorismate synthase</fullName>
        <shortName evidence="1">CS</shortName>
        <ecNumber evidence="1">4.2.3.5</ecNumber>
    </recommendedName>
    <alternativeName>
        <fullName evidence="1">5-enolpyruvylshikimate-3-phosphate phospholyase</fullName>
    </alternativeName>
</protein>
<organism>
    <name type="scientific">Paraburkholderia xenovorans (strain LB400)</name>
    <dbReference type="NCBI Taxonomy" id="266265"/>
    <lineage>
        <taxon>Bacteria</taxon>
        <taxon>Pseudomonadati</taxon>
        <taxon>Pseudomonadota</taxon>
        <taxon>Betaproteobacteria</taxon>
        <taxon>Burkholderiales</taxon>
        <taxon>Burkholderiaceae</taxon>
        <taxon>Paraburkholderia</taxon>
    </lineage>
</organism>
<dbReference type="EC" id="4.2.3.5" evidence="1"/>
<dbReference type="EMBL" id="CP000270">
    <property type="protein sequence ID" value="ABE31593.1"/>
    <property type="molecule type" value="Genomic_DNA"/>
</dbReference>
<dbReference type="RefSeq" id="WP_011489158.1">
    <property type="nucleotide sequence ID" value="NC_007951.1"/>
</dbReference>
<dbReference type="SMR" id="Q13WE6"/>
<dbReference type="STRING" id="266265.Bxe_A1360"/>
<dbReference type="KEGG" id="bxb:DR64_3521"/>
<dbReference type="KEGG" id="bxe:Bxe_A1360"/>
<dbReference type="PATRIC" id="fig|266265.5.peg.3210"/>
<dbReference type="eggNOG" id="COG0082">
    <property type="taxonomic scope" value="Bacteria"/>
</dbReference>
<dbReference type="OrthoDB" id="9771806at2"/>
<dbReference type="UniPathway" id="UPA00053">
    <property type="reaction ID" value="UER00090"/>
</dbReference>
<dbReference type="Proteomes" id="UP000001817">
    <property type="component" value="Chromosome 1"/>
</dbReference>
<dbReference type="GO" id="GO:0005829">
    <property type="term" value="C:cytosol"/>
    <property type="evidence" value="ECO:0007669"/>
    <property type="project" value="TreeGrafter"/>
</dbReference>
<dbReference type="GO" id="GO:0004107">
    <property type="term" value="F:chorismate synthase activity"/>
    <property type="evidence" value="ECO:0007669"/>
    <property type="project" value="UniProtKB-UniRule"/>
</dbReference>
<dbReference type="GO" id="GO:0010181">
    <property type="term" value="F:FMN binding"/>
    <property type="evidence" value="ECO:0007669"/>
    <property type="project" value="TreeGrafter"/>
</dbReference>
<dbReference type="GO" id="GO:0008652">
    <property type="term" value="P:amino acid biosynthetic process"/>
    <property type="evidence" value="ECO:0007669"/>
    <property type="project" value="UniProtKB-KW"/>
</dbReference>
<dbReference type="GO" id="GO:0009073">
    <property type="term" value="P:aromatic amino acid family biosynthetic process"/>
    <property type="evidence" value="ECO:0007669"/>
    <property type="project" value="UniProtKB-KW"/>
</dbReference>
<dbReference type="GO" id="GO:0009423">
    <property type="term" value="P:chorismate biosynthetic process"/>
    <property type="evidence" value="ECO:0007669"/>
    <property type="project" value="UniProtKB-UniRule"/>
</dbReference>
<dbReference type="CDD" id="cd07304">
    <property type="entry name" value="Chorismate_synthase"/>
    <property type="match status" value="1"/>
</dbReference>
<dbReference type="FunFam" id="3.60.150.10:FF:000001">
    <property type="entry name" value="Chorismate synthase"/>
    <property type="match status" value="1"/>
</dbReference>
<dbReference type="Gene3D" id="3.60.150.10">
    <property type="entry name" value="Chorismate synthase AroC"/>
    <property type="match status" value="1"/>
</dbReference>
<dbReference type="HAMAP" id="MF_00300">
    <property type="entry name" value="Chorismate_synth"/>
    <property type="match status" value="1"/>
</dbReference>
<dbReference type="InterPro" id="IPR000453">
    <property type="entry name" value="Chorismate_synth"/>
</dbReference>
<dbReference type="InterPro" id="IPR035904">
    <property type="entry name" value="Chorismate_synth_AroC_sf"/>
</dbReference>
<dbReference type="InterPro" id="IPR020541">
    <property type="entry name" value="Chorismate_synthase_CS"/>
</dbReference>
<dbReference type="NCBIfam" id="TIGR00033">
    <property type="entry name" value="aroC"/>
    <property type="match status" value="1"/>
</dbReference>
<dbReference type="NCBIfam" id="NF003793">
    <property type="entry name" value="PRK05382.1"/>
    <property type="match status" value="1"/>
</dbReference>
<dbReference type="PANTHER" id="PTHR21085">
    <property type="entry name" value="CHORISMATE SYNTHASE"/>
    <property type="match status" value="1"/>
</dbReference>
<dbReference type="PANTHER" id="PTHR21085:SF0">
    <property type="entry name" value="CHORISMATE SYNTHASE"/>
    <property type="match status" value="1"/>
</dbReference>
<dbReference type="Pfam" id="PF01264">
    <property type="entry name" value="Chorismate_synt"/>
    <property type="match status" value="1"/>
</dbReference>
<dbReference type="PIRSF" id="PIRSF001456">
    <property type="entry name" value="Chorismate_synth"/>
    <property type="match status" value="1"/>
</dbReference>
<dbReference type="SUPFAM" id="SSF103263">
    <property type="entry name" value="Chorismate synthase, AroC"/>
    <property type="match status" value="1"/>
</dbReference>
<dbReference type="PROSITE" id="PS00787">
    <property type="entry name" value="CHORISMATE_SYNTHASE_1"/>
    <property type="match status" value="1"/>
</dbReference>
<dbReference type="PROSITE" id="PS00788">
    <property type="entry name" value="CHORISMATE_SYNTHASE_2"/>
    <property type="match status" value="1"/>
</dbReference>
<dbReference type="PROSITE" id="PS00789">
    <property type="entry name" value="CHORISMATE_SYNTHASE_3"/>
    <property type="match status" value="1"/>
</dbReference>
<sequence>MSGNTLGTLFTVTTFGESHGPAIGCVIDGCPPGLALNEADIQLELDRRKPGTSRHVTQRQEEDKVEILSGVFEGQTTGAPIALLIRNTDQRSKDYGNIADTFRPGHADYTYWQKYGIRDYRGGGRSSARLTAPTVAAGAVAKKWLREKFGTEIRGYMAALGEIDVPFVDWAHVRENPFFVPNQQIVPQLEAYMDALRKEGDSIGARINVVASGVPVGLGEPLFDRLDADIAHAMMGINAVKGVEIGAGFASVAQRGSVHGDELTPEGFVGNHAGGVLGGISTGQDITVSIAIKPTSSIRTPRRSIDKAGQPAVVETFGRHDPCVGIRATPIAESMLALVLIDHALRHRAQCGDVSVSTPKIAASAP</sequence>
<name>AROC_PARXL</name>
<accession>Q13WE6</accession>
<evidence type="ECO:0000255" key="1">
    <source>
        <dbReference type="HAMAP-Rule" id="MF_00300"/>
    </source>
</evidence>
<keyword id="KW-0028">Amino-acid biosynthesis</keyword>
<keyword id="KW-0057">Aromatic amino acid biosynthesis</keyword>
<keyword id="KW-0274">FAD</keyword>
<keyword id="KW-0285">Flavoprotein</keyword>
<keyword id="KW-0288">FMN</keyword>
<keyword id="KW-0456">Lyase</keyword>
<keyword id="KW-0521">NADP</keyword>
<keyword id="KW-1185">Reference proteome</keyword>
<feature type="chain" id="PRO_0000256281" description="Chorismate synthase">
    <location>
        <begin position="1"/>
        <end position="366"/>
    </location>
</feature>
<feature type="binding site" evidence="1">
    <location>
        <position position="48"/>
    </location>
    <ligand>
        <name>NADP(+)</name>
        <dbReference type="ChEBI" id="CHEBI:58349"/>
    </ligand>
</feature>
<feature type="binding site" evidence="1">
    <location>
        <position position="54"/>
    </location>
    <ligand>
        <name>NADP(+)</name>
        <dbReference type="ChEBI" id="CHEBI:58349"/>
    </ligand>
</feature>
<feature type="binding site" evidence="1">
    <location>
        <begin position="125"/>
        <end position="127"/>
    </location>
    <ligand>
        <name>FMN</name>
        <dbReference type="ChEBI" id="CHEBI:58210"/>
    </ligand>
</feature>
<feature type="binding site" evidence="1">
    <location>
        <begin position="238"/>
        <end position="239"/>
    </location>
    <ligand>
        <name>FMN</name>
        <dbReference type="ChEBI" id="CHEBI:58210"/>
    </ligand>
</feature>
<feature type="binding site" evidence="1">
    <location>
        <position position="278"/>
    </location>
    <ligand>
        <name>FMN</name>
        <dbReference type="ChEBI" id="CHEBI:58210"/>
    </ligand>
</feature>
<feature type="binding site" evidence="1">
    <location>
        <begin position="293"/>
        <end position="297"/>
    </location>
    <ligand>
        <name>FMN</name>
        <dbReference type="ChEBI" id="CHEBI:58210"/>
    </ligand>
</feature>
<feature type="binding site" evidence="1">
    <location>
        <position position="319"/>
    </location>
    <ligand>
        <name>FMN</name>
        <dbReference type="ChEBI" id="CHEBI:58210"/>
    </ligand>
</feature>